<proteinExistence type="inferred from homology"/>
<keyword id="KW-0004">4Fe-4S</keyword>
<keyword id="KW-0067">ATP-binding</keyword>
<keyword id="KW-0963">Cytoplasm</keyword>
<keyword id="KW-0408">Iron</keyword>
<keyword id="KW-0411">Iron-sulfur</keyword>
<keyword id="KW-0460">Magnesium</keyword>
<keyword id="KW-0479">Metal-binding</keyword>
<keyword id="KW-0547">Nucleotide-binding</keyword>
<keyword id="KW-0694">RNA-binding</keyword>
<keyword id="KW-0808">Transferase</keyword>
<keyword id="KW-0819">tRNA processing</keyword>
<keyword id="KW-0820">tRNA-binding</keyword>
<gene>
    <name evidence="1" type="primary">ttcA</name>
    <name type="ordered locus">Bpet0329</name>
</gene>
<evidence type="ECO:0000255" key="1">
    <source>
        <dbReference type="HAMAP-Rule" id="MF_01850"/>
    </source>
</evidence>
<evidence type="ECO:0000256" key="2">
    <source>
        <dbReference type="SAM" id="MobiDB-lite"/>
    </source>
</evidence>
<sequence length="324" mass="36048">MQDLIDSPTAARTPAEEKIRHEGNKLSKRLARETTRAIADYNMIEAGDRVMVCLSGGKDSYALLDILLSLRKRAPFSFDIVAVNLDQKQPGFPPEVLPNYLTSLGVPFHIETQDTYSIVTRVIPEGKTMCSLCSRLRRGILYRVAGELGATKIALGHHRDDILATFFLNLFYGGKAKAMPPKLVSDDGRHTVIRPLAYVPEHDLVAYAKFKQFPIIPCNLCGSQENLKRQEVSRMIQEWDRRHPGRSWNVFNALSRIVPSHLMDRDLFDFAGLKPTGRPDANGDTAFDPIDPEDPREDAGDACASSPADGDAAMAEQKVVFARL</sequence>
<reference key="1">
    <citation type="journal article" date="2008" name="BMC Genomics">
        <title>The missing link: Bordetella petrii is endowed with both the metabolic versatility of environmental bacteria and virulence traits of pathogenic Bordetellae.</title>
        <authorList>
            <person name="Gross R."/>
            <person name="Guzman C.A."/>
            <person name="Sebaihia M."/>
            <person name="Martin dos Santos V.A.P."/>
            <person name="Pieper D.H."/>
            <person name="Koebnik R."/>
            <person name="Lechner M."/>
            <person name="Bartels D."/>
            <person name="Buhrmester J."/>
            <person name="Choudhuri J.V."/>
            <person name="Ebensen T."/>
            <person name="Gaigalat L."/>
            <person name="Herrmann S."/>
            <person name="Khachane A.N."/>
            <person name="Larisch C."/>
            <person name="Link S."/>
            <person name="Linke B."/>
            <person name="Meyer F."/>
            <person name="Mormann S."/>
            <person name="Nakunst D."/>
            <person name="Rueckert C."/>
            <person name="Schneiker-Bekel S."/>
            <person name="Schulze K."/>
            <person name="Voerholter F.-J."/>
            <person name="Yevsa T."/>
            <person name="Engle J.T."/>
            <person name="Goldman W.E."/>
            <person name="Puehler A."/>
            <person name="Goebel U.B."/>
            <person name="Goesmann A."/>
            <person name="Bloecker H."/>
            <person name="Kaiser O."/>
            <person name="Martinez-Arias R."/>
        </authorList>
    </citation>
    <scope>NUCLEOTIDE SEQUENCE [LARGE SCALE GENOMIC DNA]</scope>
    <source>
        <strain>ATCC BAA-461 / DSM 12804 / CCUG 43448</strain>
    </source>
</reference>
<dbReference type="EC" id="2.8.1.-" evidence="1"/>
<dbReference type="EMBL" id="AM902716">
    <property type="protein sequence ID" value="CAP40661.1"/>
    <property type="molecule type" value="Genomic_DNA"/>
</dbReference>
<dbReference type="SMR" id="A9HY25"/>
<dbReference type="STRING" id="94624.Bpet0329"/>
<dbReference type="KEGG" id="bpt:Bpet0329"/>
<dbReference type="eggNOG" id="COG0037">
    <property type="taxonomic scope" value="Bacteria"/>
</dbReference>
<dbReference type="Proteomes" id="UP000001225">
    <property type="component" value="Chromosome"/>
</dbReference>
<dbReference type="GO" id="GO:0005737">
    <property type="term" value="C:cytoplasm"/>
    <property type="evidence" value="ECO:0007669"/>
    <property type="project" value="UniProtKB-SubCell"/>
</dbReference>
<dbReference type="GO" id="GO:0051539">
    <property type="term" value="F:4 iron, 4 sulfur cluster binding"/>
    <property type="evidence" value="ECO:0007669"/>
    <property type="project" value="UniProtKB-UniRule"/>
</dbReference>
<dbReference type="GO" id="GO:0005524">
    <property type="term" value="F:ATP binding"/>
    <property type="evidence" value="ECO:0007669"/>
    <property type="project" value="UniProtKB-UniRule"/>
</dbReference>
<dbReference type="GO" id="GO:0000287">
    <property type="term" value="F:magnesium ion binding"/>
    <property type="evidence" value="ECO:0007669"/>
    <property type="project" value="UniProtKB-UniRule"/>
</dbReference>
<dbReference type="GO" id="GO:0016783">
    <property type="term" value="F:sulfurtransferase activity"/>
    <property type="evidence" value="ECO:0007669"/>
    <property type="project" value="UniProtKB-UniRule"/>
</dbReference>
<dbReference type="GO" id="GO:0000049">
    <property type="term" value="F:tRNA binding"/>
    <property type="evidence" value="ECO:0007669"/>
    <property type="project" value="UniProtKB-KW"/>
</dbReference>
<dbReference type="GO" id="GO:0034227">
    <property type="term" value="P:tRNA thio-modification"/>
    <property type="evidence" value="ECO:0007669"/>
    <property type="project" value="UniProtKB-UniRule"/>
</dbReference>
<dbReference type="CDD" id="cd24138">
    <property type="entry name" value="TtcA-like"/>
    <property type="match status" value="1"/>
</dbReference>
<dbReference type="Gene3D" id="3.40.50.620">
    <property type="entry name" value="HUPs"/>
    <property type="match status" value="1"/>
</dbReference>
<dbReference type="HAMAP" id="MF_01850">
    <property type="entry name" value="TtcA"/>
    <property type="match status" value="1"/>
</dbReference>
<dbReference type="InterPro" id="IPR014729">
    <property type="entry name" value="Rossmann-like_a/b/a_fold"/>
</dbReference>
<dbReference type="InterPro" id="IPR011063">
    <property type="entry name" value="TilS/TtcA_N"/>
</dbReference>
<dbReference type="InterPro" id="IPR012089">
    <property type="entry name" value="tRNA_Cyd_32_2_STrfase"/>
</dbReference>
<dbReference type="NCBIfam" id="NF007972">
    <property type="entry name" value="PRK10696.1"/>
    <property type="match status" value="1"/>
</dbReference>
<dbReference type="PANTHER" id="PTHR43686:SF1">
    <property type="entry name" value="AMINOTRAN_5 DOMAIN-CONTAINING PROTEIN"/>
    <property type="match status" value="1"/>
</dbReference>
<dbReference type="PANTHER" id="PTHR43686">
    <property type="entry name" value="SULFURTRANSFERASE-RELATED"/>
    <property type="match status" value="1"/>
</dbReference>
<dbReference type="Pfam" id="PF01171">
    <property type="entry name" value="ATP_bind_3"/>
    <property type="match status" value="1"/>
</dbReference>
<dbReference type="SUPFAM" id="SSF52402">
    <property type="entry name" value="Adenine nucleotide alpha hydrolases-like"/>
    <property type="match status" value="1"/>
</dbReference>
<comment type="function">
    <text evidence="1">Catalyzes the ATP-dependent 2-thiolation of cytidine in position 32 of tRNA, to form 2-thiocytidine (s(2)C32). The sulfur atoms are provided by the cysteine/cysteine desulfurase (IscS) system.</text>
</comment>
<comment type="catalytic activity">
    <reaction evidence="1">
        <text>cytidine(32) in tRNA + S-sulfanyl-L-cysteinyl-[cysteine desulfurase] + AH2 + ATP = 2-thiocytidine(32) in tRNA + L-cysteinyl-[cysteine desulfurase] + A + AMP + diphosphate + H(+)</text>
        <dbReference type="Rhea" id="RHEA:57048"/>
        <dbReference type="Rhea" id="RHEA-COMP:10288"/>
        <dbReference type="Rhea" id="RHEA-COMP:12157"/>
        <dbReference type="Rhea" id="RHEA-COMP:12158"/>
        <dbReference type="Rhea" id="RHEA-COMP:14821"/>
        <dbReference type="ChEBI" id="CHEBI:13193"/>
        <dbReference type="ChEBI" id="CHEBI:15378"/>
        <dbReference type="ChEBI" id="CHEBI:17499"/>
        <dbReference type="ChEBI" id="CHEBI:29950"/>
        <dbReference type="ChEBI" id="CHEBI:30616"/>
        <dbReference type="ChEBI" id="CHEBI:33019"/>
        <dbReference type="ChEBI" id="CHEBI:61963"/>
        <dbReference type="ChEBI" id="CHEBI:82748"/>
        <dbReference type="ChEBI" id="CHEBI:141453"/>
        <dbReference type="ChEBI" id="CHEBI:456215"/>
    </reaction>
    <physiologicalReaction direction="left-to-right" evidence="1">
        <dbReference type="Rhea" id="RHEA:57049"/>
    </physiologicalReaction>
</comment>
<comment type="cofactor">
    <cofactor evidence="1">
        <name>Mg(2+)</name>
        <dbReference type="ChEBI" id="CHEBI:18420"/>
    </cofactor>
</comment>
<comment type="cofactor">
    <cofactor evidence="1">
        <name>[4Fe-4S] cluster</name>
        <dbReference type="ChEBI" id="CHEBI:49883"/>
    </cofactor>
    <text evidence="1">Binds 1 [4Fe-4S] cluster per subunit. The cluster is chelated by three Cys residues, the fourth Fe has a free coordination site that may bind a sulfur atom transferred from the persulfide of IscS.</text>
</comment>
<comment type="pathway">
    <text evidence="1">tRNA modification.</text>
</comment>
<comment type="subunit">
    <text evidence="1">Homodimer.</text>
</comment>
<comment type="subcellular location">
    <subcellularLocation>
        <location evidence="1">Cytoplasm</location>
    </subcellularLocation>
</comment>
<comment type="miscellaneous">
    <text evidence="1">The thiolation reaction likely consists of two steps: a first activation step by ATP to form an adenylated intermediate of the target base of tRNA, and a second nucleophilic substitution step of the sulfur (S) atom supplied by the hydrosulfide attached to the Fe-S cluster.</text>
</comment>
<comment type="similarity">
    <text evidence="1">Belongs to the TtcA family.</text>
</comment>
<name>TTCA_BORPD</name>
<feature type="chain" id="PRO_0000348671" description="tRNA-cytidine(32) 2-sulfurtransferase">
    <location>
        <begin position="1"/>
        <end position="324"/>
    </location>
</feature>
<feature type="region of interest" description="Disordered" evidence="2">
    <location>
        <begin position="1"/>
        <end position="26"/>
    </location>
</feature>
<feature type="region of interest" description="Disordered" evidence="2">
    <location>
        <begin position="278"/>
        <end position="310"/>
    </location>
</feature>
<feature type="short sequence motif" description="PP-loop motif" evidence="1">
    <location>
        <begin position="55"/>
        <end position="60"/>
    </location>
</feature>
<feature type="compositionally biased region" description="Basic and acidic residues" evidence="2">
    <location>
        <begin position="14"/>
        <end position="26"/>
    </location>
</feature>
<feature type="binding site" evidence="1">
    <location>
        <position position="130"/>
    </location>
    <ligand>
        <name>[4Fe-4S] cluster</name>
        <dbReference type="ChEBI" id="CHEBI:49883"/>
    </ligand>
</feature>
<feature type="binding site" evidence="1">
    <location>
        <position position="133"/>
    </location>
    <ligand>
        <name>[4Fe-4S] cluster</name>
        <dbReference type="ChEBI" id="CHEBI:49883"/>
    </ligand>
</feature>
<feature type="binding site" evidence="1">
    <location>
        <position position="221"/>
    </location>
    <ligand>
        <name>[4Fe-4S] cluster</name>
        <dbReference type="ChEBI" id="CHEBI:49883"/>
    </ligand>
</feature>
<protein>
    <recommendedName>
        <fullName evidence="1">tRNA-cytidine(32) 2-sulfurtransferase</fullName>
        <ecNumber evidence="1">2.8.1.-</ecNumber>
    </recommendedName>
    <alternativeName>
        <fullName evidence="1">Two-thiocytidine biosynthesis protein A</fullName>
    </alternativeName>
    <alternativeName>
        <fullName evidence="1">tRNA 2-thiocytidine biosynthesis protein TtcA</fullName>
    </alternativeName>
</protein>
<organism>
    <name type="scientific">Bordetella petrii (strain ATCC BAA-461 / DSM 12804 / CCUG 43448)</name>
    <dbReference type="NCBI Taxonomy" id="340100"/>
    <lineage>
        <taxon>Bacteria</taxon>
        <taxon>Pseudomonadati</taxon>
        <taxon>Pseudomonadota</taxon>
        <taxon>Betaproteobacteria</taxon>
        <taxon>Burkholderiales</taxon>
        <taxon>Alcaligenaceae</taxon>
        <taxon>Bordetella</taxon>
    </lineage>
</organism>
<accession>A9HY25</accession>